<name>SBT38_ARATH</name>
<accession>Q9SZY3</accession>
<accession>Q9ZSB2</accession>
<comment type="subcellular location">
    <subcellularLocation>
        <location evidence="2">Secreted</location>
    </subcellularLocation>
</comment>
<comment type="similarity">
    <text evidence="8">Belongs to the peptidase S8 family.</text>
</comment>
<comment type="sequence caution" evidence="8">
    <conflict type="erroneous gene model prediction">
        <sequence resource="EMBL-CDS" id="AAD03430"/>
    </conflict>
</comment>
<reference key="1">
    <citation type="journal article" date="1999" name="Nature">
        <title>Sequence and analysis of chromosome 4 of the plant Arabidopsis thaliana.</title>
        <authorList>
            <person name="Mayer K.F.X."/>
            <person name="Schueller C."/>
            <person name="Wambutt R."/>
            <person name="Murphy G."/>
            <person name="Volckaert G."/>
            <person name="Pohl T."/>
            <person name="Duesterhoeft A."/>
            <person name="Stiekema W."/>
            <person name="Entian K.-D."/>
            <person name="Terryn N."/>
            <person name="Harris B."/>
            <person name="Ansorge W."/>
            <person name="Brandt P."/>
            <person name="Grivell L.A."/>
            <person name="Rieger M."/>
            <person name="Weichselgartner M."/>
            <person name="de Simone V."/>
            <person name="Obermaier B."/>
            <person name="Mache R."/>
            <person name="Mueller M."/>
            <person name="Kreis M."/>
            <person name="Delseny M."/>
            <person name="Puigdomenech P."/>
            <person name="Watson M."/>
            <person name="Schmidtheini T."/>
            <person name="Reichert B."/>
            <person name="Portetelle D."/>
            <person name="Perez-Alonso M."/>
            <person name="Boutry M."/>
            <person name="Bancroft I."/>
            <person name="Vos P."/>
            <person name="Hoheisel J."/>
            <person name="Zimmermann W."/>
            <person name="Wedler H."/>
            <person name="Ridley P."/>
            <person name="Langham S.-A."/>
            <person name="McCullagh B."/>
            <person name="Bilham L."/>
            <person name="Robben J."/>
            <person name="van der Schueren J."/>
            <person name="Grymonprez B."/>
            <person name="Chuang Y.-J."/>
            <person name="Vandenbussche F."/>
            <person name="Braeken M."/>
            <person name="Weltjens I."/>
            <person name="Voet M."/>
            <person name="Bastiaens I."/>
            <person name="Aert R."/>
            <person name="Defoor E."/>
            <person name="Weitzenegger T."/>
            <person name="Bothe G."/>
            <person name="Ramsperger U."/>
            <person name="Hilbert H."/>
            <person name="Braun M."/>
            <person name="Holzer E."/>
            <person name="Brandt A."/>
            <person name="Peters S."/>
            <person name="van Staveren M."/>
            <person name="Dirkse W."/>
            <person name="Mooijman P."/>
            <person name="Klein Lankhorst R."/>
            <person name="Rose M."/>
            <person name="Hauf J."/>
            <person name="Koetter P."/>
            <person name="Berneiser S."/>
            <person name="Hempel S."/>
            <person name="Feldpausch M."/>
            <person name="Lamberth S."/>
            <person name="Van den Daele H."/>
            <person name="De Keyser A."/>
            <person name="Buysshaert C."/>
            <person name="Gielen J."/>
            <person name="Villarroel R."/>
            <person name="De Clercq R."/>
            <person name="van Montagu M."/>
            <person name="Rogers J."/>
            <person name="Cronin A."/>
            <person name="Quail M.A."/>
            <person name="Bray-Allen S."/>
            <person name="Clark L."/>
            <person name="Doggett J."/>
            <person name="Hall S."/>
            <person name="Kay M."/>
            <person name="Lennard N."/>
            <person name="McLay K."/>
            <person name="Mayes R."/>
            <person name="Pettett A."/>
            <person name="Rajandream M.A."/>
            <person name="Lyne M."/>
            <person name="Benes V."/>
            <person name="Rechmann S."/>
            <person name="Borkova D."/>
            <person name="Bloecker H."/>
            <person name="Scharfe M."/>
            <person name="Grimm M."/>
            <person name="Loehnert T.-H."/>
            <person name="Dose S."/>
            <person name="de Haan M."/>
            <person name="Maarse A.C."/>
            <person name="Schaefer M."/>
            <person name="Mueller-Auer S."/>
            <person name="Gabel C."/>
            <person name="Fuchs M."/>
            <person name="Fartmann B."/>
            <person name="Granderath K."/>
            <person name="Dauner D."/>
            <person name="Herzl A."/>
            <person name="Neumann S."/>
            <person name="Argiriou A."/>
            <person name="Vitale D."/>
            <person name="Liguori R."/>
            <person name="Piravandi E."/>
            <person name="Massenet O."/>
            <person name="Quigley F."/>
            <person name="Clabauld G."/>
            <person name="Muendlein A."/>
            <person name="Felber R."/>
            <person name="Schnabl S."/>
            <person name="Hiller R."/>
            <person name="Schmidt W."/>
            <person name="Lecharny A."/>
            <person name="Aubourg S."/>
            <person name="Chefdor F."/>
            <person name="Cooke R."/>
            <person name="Berger C."/>
            <person name="Monfort A."/>
            <person name="Casacuberta E."/>
            <person name="Gibbons T."/>
            <person name="Weber N."/>
            <person name="Vandenbol M."/>
            <person name="Bargues M."/>
            <person name="Terol J."/>
            <person name="Torres A."/>
            <person name="Perez-Perez A."/>
            <person name="Purnelle B."/>
            <person name="Bent E."/>
            <person name="Johnson S."/>
            <person name="Tacon D."/>
            <person name="Jesse T."/>
            <person name="Heijnen L."/>
            <person name="Schwarz S."/>
            <person name="Scholler P."/>
            <person name="Heber S."/>
            <person name="Francs P."/>
            <person name="Bielke C."/>
            <person name="Frishman D."/>
            <person name="Haase D."/>
            <person name="Lemcke K."/>
            <person name="Mewes H.-W."/>
            <person name="Stocker S."/>
            <person name="Zaccaria P."/>
            <person name="Bevan M."/>
            <person name="Wilson R.K."/>
            <person name="de la Bastide M."/>
            <person name="Habermann K."/>
            <person name="Parnell L."/>
            <person name="Dedhia N."/>
            <person name="Gnoj L."/>
            <person name="Schutz K."/>
            <person name="Huang E."/>
            <person name="Spiegel L."/>
            <person name="Sekhon M."/>
            <person name="Murray J."/>
            <person name="Sheet P."/>
            <person name="Cordes M."/>
            <person name="Abu-Threideh J."/>
            <person name="Stoneking T."/>
            <person name="Kalicki J."/>
            <person name="Graves T."/>
            <person name="Harmon G."/>
            <person name="Edwards J."/>
            <person name="Latreille P."/>
            <person name="Courtney L."/>
            <person name="Cloud J."/>
            <person name="Abbott A."/>
            <person name="Scott K."/>
            <person name="Johnson D."/>
            <person name="Minx P."/>
            <person name="Bentley D."/>
            <person name="Fulton B."/>
            <person name="Miller N."/>
            <person name="Greco T."/>
            <person name="Kemp K."/>
            <person name="Kramer J."/>
            <person name="Fulton L."/>
            <person name="Mardis E."/>
            <person name="Dante M."/>
            <person name="Pepin K."/>
            <person name="Hillier L.W."/>
            <person name="Nelson J."/>
            <person name="Spieth J."/>
            <person name="Ryan E."/>
            <person name="Andrews S."/>
            <person name="Geisel C."/>
            <person name="Layman D."/>
            <person name="Du H."/>
            <person name="Ali J."/>
            <person name="Berghoff A."/>
            <person name="Jones K."/>
            <person name="Drone K."/>
            <person name="Cotton M."/>
            <person name="Joshu C."/>
            <person name="Antonoiu B."/>
            <person name="Zidanic M."/>
            <person name="Strong C."/>
            <person name="Sun H."/>
            <person name="Lamar B."/>
            <person name="Yordan C."/>
            <person name="Ma P."/>
            <person name="Zhong J."/>
            <person name="Preston R."/>
            <person name="Vil D."/>
            <person name="Shekher M."/>
            <person name="Matero A."/>
            <person name="Shah R."/>
            <person name="Swaby I.K."/>
            <person name="O'Shaughnessy A."/>
            <person name="Rodriguez M."/>
            <person name="Hoffman J."/>
            <person name="Till S."/>
            <person name="Granat S."/>
            <person name="Shohdy N."/>
            <person name="Hasegawa A."/>
            <person name="Hameed A."/>
            <person name="Lodhi M."/>
            <person name="Johnson A."/>
            <person name="Chen E."/>
            <person name="Marra M.A."/>
            <person name="Martienssen R."/>
            <person name="McCombie W.R."/>
        </authorList>
    </citation>
    <scope>NUCLEOTIDE SEQUENCE [LARGE SCALE GENOMIC DNA]</scope>
    <source>
        <strain>cv. Columbia</strain>
    </source>
</reference>
<reference key="2">
    <citation type="journal article" date="2017" name="Plant J.">
        <title>Araport11: a complete reannotation of the Arabidopsis thaliana reference genome.</title>
        <authorList>
            <person name="Cheng C.Y."/>
            <person name="Krishnakumar V."/>
            <person name="Chan A.P."/>
            <person name="Thibaud-Nissen F."/>
            <person name="Schobel S."/>
            <person name="Town C.D."/>
        </authorList>
    </citation>
    <scope>GENOME REANNOTATION</scope>
    <source>
        <strain>cv. Columbia</strain>
    </source>
</reference>
<reference key="3">
    <citation type="journal article" date="2005" name="PLoS Comput. Biol.">
        <title>Inferring hypotheses on functional relationships of genes: Analysis of the Arabidopsis thaliana subtilase gene family.</title>
        <authorList>
            <person name="Rautengarten C."/>
            <person name="Steinhauser D."/>
            <person name="Bussis D."/>
            <person name="Stintzi A."/>
            <person name="Schaller A."/>
            <person name="Kopka J."/>
            <person name="Altmann T."/>
        </authorList>
    </citation>
    <scope>GENE FAMILY</scope>
    <scope>NOMENCLATURE</scope>
</reference>
<gene>
    <name evidence="7" type="primary">SBT3.8</name>
    <name evidence="9" type="ordered locus">At4g10540</name>
    <name evidence="10" type="ORF">F3H7.2</name>
    <name evidence="11" type="ORF">F7L13.120</name>
</gene>
<sequence>MKSCRTLIFVAIILNGLSTFVAHAGAESKVHIVYLGEKQHDDPEFVTESHHRMLWSLLGSKEDAHSSMVHSYRHGFSGFAAKLTKSQAKKLADLPEVVHVTPDSFYQLDTTRTWDYLGLSVANPKNLLNDTNMGEEVIIGIVDSGVWPESEVFNDNGIGPVPSHWKGGCVSGENFTSSQCNKKLIGAKYFINGFLATHESFNSTESLDFISPRDRSGHGTHVATIAGGSYVPSISYKGLAGGTVRGGAPRARIAMYKACWYLDRFDINTCSSADILKAMDEAMHDGVDVLSLSIGYRFPYFPETDVRAVIATGAFHAVLKGITVVCSGGNSGPAAQTVGNTAPWILTVAATTLDRSFPTPITLGNNKLILGQAMYTGPELGFTSLVYPENPGNSNESFSGDCELLFFNSNHTMAGKVVLCFTTSTRYITVSSAVSYVKEAGGLGVIVARNPGDNLSPCEDDFPCVAVDYELGTDILLYIRSTGLPVVKIQPSKTLVGQPVGTKVADFSSRGPNSIEPAILKPDIAAPGVSILAATTTNKTFNDRGFIFLSGTSMAAPTISGVVALLKALHRDWSPAAIRSAIVTTAWRTDPFGEQIFAEGSPRKLADPFDYGGGLVNPEKAAKPGLVYDLGLEDYVLYMCSVGYNETSISQLVGKGTVCSNPKPSVLDFNLPSITIPNLKDEVTLTRTLTNVGQLESVYKVVIEPPIGIQVTVTPETLLFNSTTKRVSFKVKVSTTHKINTGYFFGSLTWSDSLHNVTIPLSVRTQILQNYYDEN</sequence>
<organism>
    <name type="scientific">Arabidopsis thaliana</name>
    <name type="common">Mouse-ear cress</name>
    <dbReference type="NCBI Taxonomy" id="3702"/>
    <lineage>
        <taxon>Eukaryota</taxon>
        <taxon>Viridiplantae</taxon>
        <taxon>Streptophyta</taxon>
        <taxon>Embryophyta</taxon>
        <taxon>Tracheophyta</taxon>
        <taxon>Spermatophyta</taxon>
        <taxon>Magnoliopsida</taxon>
        <taxon>eudicotyledons</taxon>
        <taxon>Gunneridae</taxon>
        <taxon>Pentapetalae</taxon>
        <taxon>rosids</taxon>
        <taxon>malvids</taxon>
        <taxon>Brassicales</taxon>
        <taxon>Brassicaceae</taxon>
        <taxon>Camelineae</taxon>
        <taxon>Arabidopsis</taxon>
    </lineage>
</organism>
<dbReference type="EC" id="3.4.21.-" evidence="6"/>
<dbReference type="EMBL" id="AF118222">
    <property type="protein sequence ID" value="AAD03430.1"/>
    <property type="status" value="ALT_SEQ"/>
    <property type="molecule type" value="Genomic_DNA"/>
</dbReference>
<dbReference type="EMBL" id="AL049524">
    <property type="protein sequence ID" value="CAB40047.1"/>
    <property type="molecule type" value="Genomic_DNA"/>
</dbReference>
<dbReference type="EMBL" id="AL161517">
    <property type="protein sequence ID" value="CAB78177.1"/>
    <property type="molecule type" value="Genomic_DNA"/>
</dbReference>
<dbReference type="EMBL" id="CP002687">
    <property type="protein sequence ID" value="AEE82895.1"/>
    <property type="molecule type" value="Genomic_DNA"/>
</dbReference>
<dbReference type="PIR" id="T04189">
    <property type="entry name" value="T04189"/>
</dbReference>
<dbReference type="RefSeq" id="NP_567361.1">
    <property type="nucleotide sequence ID" value="NM_117122.1"/>
</dbReference>
<dbReference type="SMR" id="Q9SZY3"/>
<dbReference type="FunCoup" id="Q9SZY3">
    <property type="interactions" value="218"/>
</dbReference>
<dbReference type="STRING" id="3702.Q9SZY3"/>
<dbReference type="MEROPS" id="S08.A45"/>
<dbReference type="GlyCosmos" id="Q9SZY3">
    <property type="glycosylation" value="9 sites, No reported glycans"/>
</dbReference>
<dbReference type="GlyGen" id="Q9SZY3">
    <property type="glycosylation" value="9 sites"/>
</dbReference>
<dbReference type="PaxDb" id="3702-AT4G10540.1"/>
<dbReference type="EnsemblPlants" id="AT4G10540.1">
    <property type="protein sequence ID" value="AT4G10540.1"/>
    <property type="gene ID" value="AT4G10540"/>
</dbReference>
<dbReference type="GeneID" id="826646"/>
<dbReference type="Gramene" id="AT4G10540.1">
    <property type="protein sequence ID" value="AT4G10540.1"/>
    <property type="gene ID" value="AT4G10540"/>
</dbReference>
<dbReference type="KEGG" id="ath:AT4G10540"/>
<dbReference type="Araport" id="AT4G10540"/>
<dbReference type="TAIR" id="AT4G10540"/>
<dbReference type="eggNOG" id="ENOG502QSF0">
    <property type="taxonomic scope" value="Eukaryota"/>
</dbReference>
<dbReference type="HOGENOM" id="CLU_000625_4_2_1"/>
<dbReference type="InParanoid" id="Q9SZY3"/>
<dbReference type="OMA" id="SDYVHNV"/>
<dbReference type="PhylomeDB" id="Q9SZY3"/>
<dbReference type="PRO" id="PR:Q9SZY3"/>
<dbReference type="Proteomes" id="UP000006548">
    <property type="component" value="Chromosome 4"/>
</dbReference>
<dbReference type="ExpressionAtlas" id="Q9SZY3">
    <property type="expression patterns" value="baseline and differential"/>
</dbReference>
<dbReference type="GO" id="GO:0005829">
    <property type="term" value="C:cytosol"/>
    <property type="evidence" value="ECO:0007005"/>
    <property type="project" value="TAIR"/>
</dbReference>
<dbReference type="GO" id="GO:0005576">
    <property type="term" value="C:extracellular region"/>
    <property type="evidence" value="ECO:0007669"/>
    <property type="project" value="UniProtKB-SubCell"/>
</dbReference>
<dbReference type="GO" id="GO:0004252">
    <property type="term" value="F:serine-type endopeptidase activity"/>
    <property type="evidence" value="ECO:0007669"/>
    <property type="project" value="InterPro"/>
</dbReference>
<dbReference type="GO" id="GO:0006508">
    <property type="term" value="P:proteolysis"/>
    <property type="evidence" value="ECO:0000314"/>
    <property type="project" value="TAIR"/>
</dbReference>
<dbReference type="CDD" id="cd02120">
    <property type="entry name" value="PA_subtilisin_like"/>
    <property type="match status" value="1"/>
</dbReference>
<dbReference type="CDD" id="cd04852">
    <property type="entry name" value="Peptidases_S8_3"/>
    <property type="match status" value="1"/>
</dbReference>
<dbReference type="FunFam" id="2.60.40.2310:FF:000001">
    <property type="entry name" value="Subtilisin-like protease SBT1.5"/>
    <property type="match status" value="1"/>
</dbReference>
<dbReference type="FunFam" id="3.40.50.200:FF:000006">
    <property type="entry name" value="Subtilisin-like protease SBT1.5"/>
    <property type="match status" value="1"/>
</dbReference>
<dbReference type="FunFam" id="3.50.30.30:FF:000005">
    <property type="entry name" value="subtilisin-like protease SBT1.5"/>
    <property type="match status" value="1"/>
</dbReference>
<dbReference type="FunFam" id="3.30.70.80:FF:000002">
    <property type="entry name" value="Subtilisin-like protease SBT5.3"/>
    <property type="match status" value="1"/>
</dbReference>
<dbReference type="Gene3D" id="2.60.40.2310">
    <property type="match status" value="1"/>
</dbReference>
<dbReference type="Gene3D" id="3.50.30.30">
    <property type="match status" value="1"/>
</dbReference>
<dbReference type="Gene3D" id="3.30.70.80">
    <property type="entry name" value="Peptidase S8 propeptide/proteinase inhibitor I9"/>
    <property type="match status" value="1"/>
</dbReference>
<dbReference type="Gene3D" id="3.40.50.200">
    <property type="entry name" value="Peptidase S8/S53 domain"/>
    <property type="match status" value="1"/>
</dbReference>
<dbReference type="InterPro" id="IPR003137">
    <property type="entry name" value="PA_domain"/>
</dbReference>
<dbReference type="InterPro" id="IPR000209">
    <property type="entry name" value="Peptidase_S8/S53_dom"/>
</dbReference>
<dbReference type="InterPro" id="IPR036852">
    <property type="entry name" value="Peptidase_S8/S53_dom_sf"/>
</dbReference>
<dbReference type="InterPro" id="IPR023828">
    <property type="entry name" value="Peptidase_S8_Ser-AS"/>
</dbReference>
<dbReference type="InterPro" id="IPR015500">
    <property type="entry name" value="Peptidase_S8_subtilisin-rel"/>
</dbReference>
<dbReference type="InterPro" id="IPR034197">
    <property type="entry name" value="Peptidases_S8_3"/>
</dbReference>
<dbReference type="InterPro" id="IPR010259">
    <property type="entry name" value="S8pro/Inhibitor_I9"/>
</dbReference>
<dbReference type="InterPro" id="IPR037045">
    <property type="entry name" value="S8pro/Inhibitor_I9_sf"/>
</dbReference>
<dbReference type="InterPro" id="IPR045051">
    <property type="entry name" value="SBT"/>
</dbReference>
<dbReference type="InterPro" id="IPR041469">
    <property type="entry name" value="Subtilisin-like_FN3"/>
</dbReference>
<dbReference type="PANTHER" id="PTHR10795">
    <property type="entry name" value="PROPROTEIN CONVERTASE SUBTILISIN/KEXIN"/>
    <property type="match status" value="1"/>
</dbReference>
<dbReference type="Pfam" id="PF17766">
    <property type="entry name" value="fn3_6"/>
    <property type="match status" value="1"/>
</dbReference>
<dbReference type="Pfam" id="PF05922">
    <property type="entry name" value="Inhibitor_I9"/>
    <property type="match status" value="1"/>
</dbReference>
<dbReference type="Pfam" id="PF02225">
    <property type="entry name" value="PA"/>
    <property type="match status" value="1"/>
</dbReference>
<dbReference type="Pfam" id="PF00082">
    <property type="entry name" value="Peptidase_S8"/>
    <property type="match status" value="1"/>
</dbReference>
<dbReference type="PRINTS" id="PR00723">
    <property type="entry name" value="SUBTILISIN"/>
</dbReference>
<dbReference type="SUPFAM" id="SSF52743">
    <property type="entry name" value="Subtilisin-like"/>
    <property type="match status" value="1"/>
</dbReference>
<dbReference type="PROSITE" id="PS51892">
    <property type="entry name" value="SUBTILASE"/>
    <property type="match status" value="1"/>
</dbReference>
<dbReference type="PROSITE" id="PS00138">
    <property type="entry name" value="SUBTILASE_SER"/>
    <property type="match status" value="1"/>
</dbReference>
<protein>
    <recommendedName>
        <fullName evidence="7">Subtilisin-like protease SBT3.8</fullName>
        <ecNumber evidence="6">3.4.21.-</ecNumber>
    </recommendedName>
    <alternativeName>
        <fullName evidence="7">Subtilase subfamily 3 member 8</fullName>
        <shortName evidence="7">AtSBT3.8</shortName>
    </alternativeName>
</protein>
<keyword id="KW-0068">Autocatalytic cleavage</keyword>
<keyword id="KW-0325">Glycoprotein</keyword>
<keyword id="KW-0378">Hydrolase</keyword>
<keyword id="KW-0645">Protease</keyword>
<keyword id="KW-1185">Reference proteome</keyword>
<keyword id="KW-0964">Secreted</keyword>
<keyword id="KW-0720">Serine protease</keyword>
<keyword id="KW-0732">Signal</keyword>
<keyword id="KW-0865">Zymogen</keyword>
<feature type="signal peptide" evidence="3">
    <location>
        <begin position="1"/>
        <end position="26"/>
    </location>
</feature>
<feature type="propeptide" id="PRO_0000435200" description="Activation peptide" evidence="1">
    <location>
        <begin position="27"/>
        <end position="109"/>
    </location>
</feature>
<feature type="chain" id="PRO_5004332765" description="Subtilisin-like protease SBT3.8">
    <location>
        <begin position="110"/>
        <end status="unknown"/>
    </location>
</feature>
<feature type="propeptide" id="PRO_0000435201" evidence="1">
    <location>
        <begin status="unknown"/>
        <end position="775"/>
    </location>
</feature>
<feature type="domain" description="Inhibitor I9" evidence="3">
    <location>
        <begin position="30"/>
        <end position="108"/>
    </location>
</feature>
<feature type="domain" description="Peptidase S8" evidence="5">
    <location>
        <begin position="113"/>
        <end position="622"/>
    </location>
</feature>
<feature type="domain" description="PA" evidence="3">
    <location>
        <begin position="384"/>
        <end position="476"/>
    </location>
</feature>
<feature type="active site" description="Charge relay system" evidence="5">
    <location>
        <position position="143"/>
    </location>
</feature>
<feature type="active site" description="Charge relay system" evidence="5">
    <location>
        <position position="218"/>
    </location>
</feature>
<feature type="active site" description="Charge relay system" evidence="5">
    <location>
        <position position="553"/>
    </location>
</feature>
<feature type="glycosylation site" description="N-linked (GlcNAc...) asparagine" evidence="4">
    <location>
        <position position="129"/>
    </location>
</feature>
<feature type="glycosylation site" description="N-linked (GlcNAc...) asparagine" evidence="4">
    <location>
        <position position="174"/>
    </location>
</feature>
<feature type="glycosylation site" description="N-linked (GlcNAc...) asparagine" evidence="4">
    <location>
        <position position="202"/>
    </location>
</feature>
<feature type="glycosylation site" description="N-linked (GlcNAc...) asparagine" evidence="4">
    <location>
        <position position="395"/>
    </location>
</feature>
<feature type="glycosylation site" description="N-linked (GlcNAc...) asparagine" evidence="4">
    <location>
        <position position="410"/>
    </location>
</feature>
<feature type="glycosylation site" description="N-linked (GlcNAc...) asparagine" evidence="4">
    <location>
        <position position="538"/>
    </location>
</feature>
<feature type="glycosylation site" description="N-linked (GlcNAc...) asparagine" evidence="4">
    <location>
        <position position="645"/>
    </location>
</feature>
<feature type="glycosylation site" description="N-linked (GlcNAc...) asparagine" evidence="4">
    <location>
        <position position="721"/>
    </location>
</feature>
<feature type="glycosylation site" description="N-linked (GlcNAc...) asparagine" evidence="4">
    <location>
        <position position="756"/>
    </location>
</feature>
<proteinExistence type="inferred from homology"/>
<evidence type="ECO:0000250" key="1">
    <source>
        <dbReference type="UniProtKB" id="Q39547"/>
    </source>
</evidence>
<evidence type="ECO:0000250" key="2">
    <source>
        <dbReference type="UniProtKB" id="Q84WS0"/>
    </source>
</evidence>
<evidence type="ECO:0000255" key="3"/>
<evidence type="ECO:0000255" key="4">
    <source>
        <dbReference type="PROSITE-ProRule" id="PRU00498"/>
    </source>
</evidence>
<evidence type="ECO:0000255" key="5">
    <source>
        <dbReference type="PROSITE-ProRule" id="PRU01240"/>
    </source>
</evidence>
<evidence type="ECO:0000255" key="6">
    <source>
        <dbReference type="PROSITE-ProRule" id="PRU10082"/>
    </source>
</evidence>
<evidence type="ECO:0000303" key="7">
    <source>
    </source>
</evidence>
<evidence type="ECO:0000305" key="8"/>
<evidence type="ECO:0000312" key="9">
    <source>
        <dbReference type="Araport" id="AT4G10540"/>
    </source>
</evidence>
<evidence type="ECO:0000312" key="10">
    <source>
        <dbReference type="EMBL" id="AAD03430.1"/>
    </source>
</evidence>
<evidence type="ECO:0000312" key="11">
    <source>
        <dbReference type="EMBL" id="CAB40047.1"/>
    </source>
</evidence>